<dbReference type="EMBL" id="HE600986">
    <property type="protein sequence ID" value="CBX32994.1"/>
    <property type="molecule type" value="Genomic_DNA"/>
</dbReference>
<dbReference type="RefSeq" id="XP_002633459.1">
    <property type="nucleotide sequence ID" value="XM_002633413.1"/>
</dbReference>
<dbReference type="SMR" id="A8X0L4"/>
<dbReference type="FunCoup" id="A8X0L4">
    <property type="interactions" value="2413"/>
</dbReference>
<dbReference type="EnsemblMetazoa" id="CBG06227.1">
    <property type="protein sequence ID" value="CBG06227.1"/>
    <property type="gene ID" value="WBGene00028534"/>
</dbReference>
<dbReference type="GeneID" id="8575456"/>
<dbReference type="KEGG" id="cbr:CBG_06227"/>
<dbReference type="CTD" id="8575456"/>
<dbReference type="WormBase" id="CBG06227">
    <property type="protein sequence ID" value="CBP01506"/>
    <property type="gene ID" value="WBGene00028534"/>
</dbReference>
<dbReference type="eggNOG" id="KOG3807">
    <property type="taxonomic scope" value="Eukaryota"/>
</dbReference>
<dbReference type="HOGENOM" id="CLU_035578_2_0_1"/>
<dbReference type="InParanoid" id="A8X0L4"/>
<dbReference type="OMA" id="QDYEIMQ"/>
<dbReference type="Proteomes" id="UP000008549">
    <property type="component" value="Unassembled WGS sequence"/>
</dbReference>
<dbReference type="GO" id="GO:0016020">
    <property type="term" value="C:membrane"/>
    <property type="evidence" value="ECO:0007669"/>
    <property type="project" value="UniProtKB-SubCell"/>
</dbReference>
<dbReference type="CDD" id="cd11557">
    <property type="entry name" value="ST7"/>
    <property type="match status" value="1"/>
</dbReference>
<dbReference type="InterPro" id="IPR007311">
    <property type="entry name" value="ST7"/>
</dbReference>
<dbReference type="PANTHER" id="PTHR12745:SF6">
    <property type="entry name" value="PROTEIN ST7 HOMOLOG"/>
    <property type="match status" value="1"/>
</dbReference>
<dbReference type="PANTHER" id="PTHR12745">
    <property type="entry name" value="SUPPRESSION OF TUMORIGENICITY 7"/>
    <property type="match status" value="1"/>
</dbReference>
<dbReference type="Pfam" id="PF04184">
    <property type="entry name" value="ST7"/>
    <property type="match status" value="1"/>
</dbReference>
<comment type="subcellular location">
    <subcellularLocation>
        <location evidence="2">Membrane</location>
        <topology evidence="2">Multi-pass membrane protein</topology>
    </subcellularLocation>
</comment>
<comment type="similarity">
    <text evidence="2">Belongs to the ST7 family.</text>
</comment>
<reference key="1">
    <citation type="journal article" date="2003" name="PLoS Biol.">
        <title>The genome sequence of Caenorhabditis briggsae: a platform for comparative genomics.</title>
        <authorList>
            <person name="Stein L.D."/>
            <person name="Bao Z."/>
            <person name="Blasiar D."/>
            <person name="Blumenthal T."/>
            <person name="Brent M.R."/>
            <person name="Chen N."/>
            <person name="Chinwalla A."/>
            <person name="Clarke L."/>
            <person name="Clee C."/>
            <person name="Coghlan A."/>
            <person name="Coulson A."/>
            <person name="D'Eustachio P."/>
            <person name="Fitch D.H.A."/>
            <person name="Fulton L.A."/>
            <person name="Fulton R.E."/>
            <person name="Griffiths-Jones S."/>
            <person name="Harris T.W."/>
            <person name="Hillier L.W."/>
            <person name="Kamath R."/>
            <person name="Kuwabara P.E."/>
            <person name="Mardis E.R."/>
            <person name="Marra M.A."/>
            <person name="Miner T.L."/>
            <person name="Minx P."/>
            <person name="Mullikin J.C."/>
            <person name="Plumb R.W."/>
            <person name="Rogers J."/>
            <person name="Schein J.E."/>
            <person name="Sohrmann M."/>
            <person name="Spieth J."/>
            <person name="Stajich J.E."/>
            <person name="Wei C."/>
            <person name="Willey D."/>
            <person name="Wilson R.K."/>
            <person name="Durbin R.M."/>
            <person name="Waterston R.H."/>
        </authorList>
    </citation>
    <scope>NUCLEOTIDE SEQUENCE [LARGE SCALE GENOMIC DNA]</scope>
    <source>
        <strain>AF16</strain>
    </source>
</reference>
<name>ST7_CAEBR</name>
<feature type="chain" id="PRO_0000339221" description="Protein ST7 homolog">
    <location>
        <begin position="1"/>
        <end position="536"/>
    </location>
</feature>
<feature type="transmembrane region" description="Helical" evidence="1">
    <location>
        <begin position="3"/>
        <end position="23"/>
    </location>
</feature>
<feature type="transmembrane region" description="Helical" evidence="1">
    <location>
        <begin position="49"/>
        <end position="69"/>
    </location>
</feature>
<feature type="transmembrane region" description="Helical" evidence="1">
    <location>
        <begin position="464"/>
        <end position="484"/>
    </location>
</feature>
<feature type="coiled-coil region" evidence="1">
    <location>
        <begin position="192"/>
        <end position="219"/>
    </location>
</feature>
<protein>
    <recommendedName>
        <fullName>Protein ST7 homolog</fullName>
    </recommendedName>
</protein>
<proteinExistence type="inferred from homology"/>
<keyword id="KW-0175">Coiled coil</keyword>
<keyword id="KW-0472">Membrane</keyword>
<keyword id="KW-1185">Reference proteome</keyword>
<keyword id="KW-0812">Transmembrane</keyword>
<keyword id="KW-1133">Transmembrane helix</keyword>
<sequence>MACSWTFLWLLWIAMVAVLLFFLRGPLKISESLESVSATSYFNNLTPKFYVALTGTSSLVSGIILIFEWWYFKNNAGVEQGEDEGSDNEESIDNPKTVPECKVWRNPMALFRAAEYNRFRKETNSEPLTYYDMNLSAQDHQSLFMCDEDQGRAEYEIMQVAWRERESEQRIQTARTALAINSECASALVLLAEEDTETVAQAENVLRRALRAIENTLSTYSNNQIASYGQNGDTVRKRDLTIQTYIKRRLAMCARKQGRLREAIKGFRDLSREQSLSTLLSVQDNLIEACLEVQAYADVQNLLVRYDGYGTSCSYDQREPRSAAMSYTSALLKVRAVAENFRCPSESSVRRGLSSAEQTAIEALTRAMEFNPHVPPYLLEIRAMIMPPEHFLKRGDSEALAYAFFHIQHWKRIDGALQLLSIVWKDFVPKVNKDTHAFSSQLESADKELLPAWHEQSAFPQTESTLGMLIQTFACLAICILAVLSQQVPSSYGEMLRQIVTSGVQMYENSMNTFSQWAPNNIIPYLASKPVSVPEI</sequence>
<accession>A8X0L4</accession>
<accession>E3CTY5</accession>
<organism>
    <name type="scientific">Caenorhabditis briggsae</name>
    <dbReference type="NCBI Taxonomy" id="6238"/>
    <lineage>
        <taxon>Eukaryota</taxon>
        <taxon>Metazoa</taxon>
        <taxon>Ecdysozoa</taxon>
        <taxon>Nematoda</taxon>
        <taxon>Chromadorea</taxon>
        <taxon>Rhabditida</taxon>
        <taxon>Rhabditina</taxon>
        <taxon>Rhabditomorpha</taxon>
        <taxon>Rhabditoidea</taxon>
        <taxon>Rhabditidae</taxon>
        <taxon>Peloderinae</taxon>
        <taxon>Caenorhabditis</taxon>
    </lineage>
</organism>
<gene>
    <name type="ORF">CBG06227</name>
</gene>
<evidence type="ECO:0000255" key="1"/>
<evidence type="ECO:0000305" key="2"/>